<reference key="1">
    <citation type="journal article" date="2007" name="PLoS Genet.">
        <title>Patterns and implications of gene gain and loss in the evolution of Prochlorococcus.</title>
        <authorList>
            <person name="Kettler G.C."/>
            <person name="Martiny A.C."/>
            <person name="Huang K."/>
            <person name="Zucker J."/>
            <person name="Coleman M.L."/>
            <person name="Rodrigue S."/>
            <person name="Chen F."/>
            <person name="Lapidus A."/>
            <person name="Ferriera S."/>
            <person name="Johnson J."/>
            <person name="Steglich C."/>
            <person name="Church G.M."/>
            <person name="Richardson P."/>
            <person name="Chisholm S.W."/>
        </authorList>
    </citation>
    <scope>NUCLEOTIDE SEQUENCE [LARGE SCALE GENOMIC DNA]</scope>
    <source>
        <strain>NATL1A</strain>
    </source>
</reference>
<evidence type="ECO:0000255" key="1">
    <source>
        <dbReference type="HAMAP-Rule" id="MF_01416"/>
    </source>
</evidence>
<name>ATPD_PROM1</name>
<proteinExistence type="inferred from homology"/>
<accession>A2C4J6</accession>
<gene>
    <name evidence="1" type="primary">atpH</name>
    <name evidence="1" type="synonym">atpD</name>
    <name type="ordered locus">NATL1_18501</name>
</gene>
<feature type="chain" id="PRO_0000371068" description="ATP synthase subunit delta">
    <location>
        <begin position="1"/>
        <end position="182"/>
    </location>
</feature>
<organism>
    <name type="scientific">Prochlorococcus marinus (strain NATL1A)</name>
    <dbReference type="NCBI Taxonomy" id="167555"/>
    <lineage>
        <taxon>Bacteria</taxon>
        <taxon>Bacillati</taxon>
        <taxon>Cyanobacteriota</taxon>
        <taxon>Cyanophyceae</taxon>
        <taxon>Synechococcales</taxon>
        <taxon>Prochlorococcaceae</taxon>
        <taxon>Prochlorococcus</taxon>
    </lineage>
</organism>
<protein>
    <recommendedName>
        <fullName evidence="1">ATP synthase subunit delta</fullName>
    </recommendedName>
    <alternativeName>
        <fullName evidence="1">ATP synthase F(1) sector subunit delta</fullName>
    </alternativeName>
    <alternativeName>
        <fullName evidence="1">F-type ATPase subunit delta</fullName>
        <shortName evidence="1">F-ATPase subunit delta</shortName>
    </alternativeName>
</protein>
<dbReference type="EMBL" id="CP000553">
    <property type="protein sequence ID" value="ABM76406.1"/>
    <property type="molecule type" value="Genomic_DNA"/>
</dbReference>
<dbReference type="RefSeq" id="WP_011824392.1">
    <property type="nucleotide sequence ID" value="NC_008819.1"/>
</dbReference>
<dbReference type="SMR" id="A2C4J6"/>
<dbReference type="KEGG" id="pme:NATL1_18501"/>
<dbReference type="eggNOG" id="COG0712">
    <property type="taxonomic scope" value="Bacteria"/>
</dbReference>
<dbReference type="HOGENOM" id="CLU_085114_4_1_3"/>
<dbReference type="Proteomes" id="UP000002592">
    <property type="component" value="Chromosome"/>
</dbReference>
<dbReference type="GO" id="GO:0031676">
    <property type="term" value="C:plasma membrane-derived thylakoid membrane"/>
    <property type="evidence" value="ECO:0007669"/>
    <property type="project" value="UniProtKB-SubCell"/>
</dbReference>
<dbReference type="GO" id="GO:0045259">
    <property type="term" value="C:proton-transporting ATP synthase complex"/>
    <property type="evidence" value="ECO:0007669"/>
    <property type="project" value="UniProtKB-KW"/>
</dbReference>
<dbReference type="GO" id="GO:0046933">
    <property type="term" value="F:proton-transporting ATP synthase activity, rotational mechanism"/>
    <property type="evidence" value="ECO:0007669"/>
    <property type="project" value="UniProtKB-UniRule"/>
</dbReference>
<dbReference type="Gene3D" id="1.10.520.20">
    <property type="entry name" value="N-terminal domain of the delta subunit of the F1F0-ATP synthase"/>
    <property type="match status" value="1"/>
</dbReference>
<dbReference type="HAMAP" id="MF_01416">
    <property type="entry name" value="ATP_synth_delta_bact"/>
    <property type="match status" value="1"/>
</dbReference>
<dbReference type="InterPro" id="IPR026015">
    <property type="entry name" value="ATP_synth_OSCP/delta_N_sf"/>
</dbReference>
<dbReference type="InterPro" id="IPR020781">
    <property type="entry name" value="ATPase_OSCP/d_CS"/>
</dbReference>
<dbReference type="InterPro" id="IPR000711">
    <property type="entry name" value="ATPase_OSCP/dsu"/>
</dbReference>
<dbReference type="NCBIfam" id="TIGR01145">
    <property type="entry name" value="ATP_synt_delta"/>
    <property type="match status" value="1"/>
</dbReference>
<dbReference type="PANTHER" id="PTHR11910">
    <property type="entry name" value="ATP SYNTHASE DELTA CHAIN"/>
    <property type="match status" value="1"/>
</dbReference>
<dbReference type="Pfam" id="PF00213">
    <property type="entry name" value="OSCP"/>
    <property type="match status" value="1"/>
</dbReference>
<dbReference type="PRINTS" id="PR00125">
    <property type="entry name" value="ATPASEDELTA"/>
</dbReference>
<dbReference type="SUPFAM" id="SSF47928">
    <property type="entry name" value="N-terminal domain of the delta subunit of the F1F0-ATP synthase"/>
    <property type="match status" value="1"/>
</dbReference>
<dbReference type="PROSITE" id="PS00389">
    <property type="entry name" value="ATPASE_DELTA"/>
    <property type="match status" value="1"/>
</dbReference>
<sequence>MPLLNTITTPYAEAFLQVAESRNEVDEVVTQAKSILELWNSCPEFSDAMSSPVLEVNQKKAALEKLFSSQVTPSFLNLLKLLADRQRIGLLNSVLERLLEIYREQRNIALATITSASALNEDQQSELLKKVQSIAGTDNLEIDLKVDSELLGGFVVNVGSKVIDASIAGQVRRLGLALAKVS</sequence>
<comment type="function">
    <text evidence="1">F(1)F(0) ATP synthase produces ATP from ADP in the presence of a proton or sodium gradient. F-type ATPases consist of two structural domains, F(1) containing the extramembraneous catalytic core and F(0) containing the membrane proton channel, linked together by a central stalk and a peripheral stalk. During catalysis, ATP synthesis in the catalytic domain of F(1) is coupled via a rotary mechanism of the central stalk subunits to proton translocation.</text>
</comment>
<comment type="function">
    <text evidence="1">This protein is part of the stalk that links CF(0) to CF(1). It either transmits conformational changes from CF(0) to CF(1) or is implicated in proton conduction.</text>
</comment>
<comment type="subunit">
    <text evidence="1">F-type ATPases have 2 components, F(1) - the catalytic core - and F(0) - the membrane proton channel. F(1) has five subunits: alpha(3), beta(3), gamma(1), delta(1), epsilon(1). CF(0) has four main subunits: a(1), b(1), b'(1) and c(10-14). The alpha and beta chains form an alternating ring which encloses part of the gamma chain. F(1) is attached to F(0) by a central stalk formed by the gamma and epsilon chains, while a peripheral stalk is formed by the delta, b and b' chains.</text>
</comment>
<comment type="subcellular location">
    <subcellularLocation>
        <location evidence="1">Cellular thylakoid membrane</location>
        <topology evidence="1">Peripheral membrane protein</topology>
    </subcellularLocation>
</comment>
<comment type="similarity">
    <text evidence="1">Belongs to the ATPase delta chain family.</text>
</comment>
<keyword id="KW-0066">ATP synthesis</keyword>
<keyword id="KW-0139">CF(1)</keyword>
<keyword id="KW-0375">Hydrogen ion transport</keyword>
<keyword id="KW-0406">Ion transport</keyword>
<keyword id="KW-0472">Membrane</keyword>
<keyword id="KW-0793">Thylakoid</keyword>
<keyword id="KW-0813">Transport</keyword>